<feature type="chain" id="PRO_0000451569" description="DELTA-pseudomyrmecitoxin-Pp1a subunit A">
    <location>
        <begin position="1"/>
        <end position="27"/>
    </location>
</feature>
<feature type="disulfide bond" description="Interchain (with C-28 in subunit B)" evidence="1">
    <location>
        <position position="14"/>
    </location>
</feature>
<feature type="disulfide bond" description="Interchain (with C-18 in subunit B)" evidence="1">
    <location>
        <position position="24"/>
    </location>
</feature>
<reference key="1">
    <citation type="journal article" date="2020" name="ACS Pharmacol. Transl. Sci.">
        <title>Heterodimeric Insecticidal Peptide Provides New Insights into the Molecular and Functional Diversity of Ant Venoms.</title>
        <authorList>
            <person name="Touchard A."/>
            <person name="Mendel H.C."/>
            <person name="Boulogne I."/>
            <person name="Herzig V."/>
            <person name="Braga Emidio N."/>
            <person name="King G.F."/>
            <person name="Triquigneaux M."/>
            <person name="Jaquillard L."/>
            <person name="Beroud R."/>
            <person name="De Waard M."/>
            <person name="Delalande O."/>
            <person name="Dejean A."/>
            <person name="Muttenthaler M."/>
            <person name="Duplais C."/>
        </authorList>
    </citation>
    <scope>PROTEIN SEQUENCE</scope>
    <scope>IDENTIFICATION BY MASS SPECTROMETRY</scope>
    <scope>SYNTHESIS</scope>
    <scope>FUNCTION</scope>
    <scope>SUBUNIT</scope>
    <scope>SUBCELLULAR LOCATION</scope>
    <scope>TISSUE SPECIFICITY</scope>
    <scope>TOXIC DOSE</scope>
    <source>
        <tissue evidence="2">Venom</tissue>
    </source>
</reference>
<dbReference type="GO" id="GO:0005576">
    <property type="term" value="C:extracellular region"/>
    <property type="evidence" value="ECO:0000314"/>
    <property type="project" value="UniProtKB"/>
</dbReference>
<dbReference type="GO" id="GO:0090729">
    <property type="term" value="F:toxin activity"/>
    <property type="evidence" value="ECO:0000314"/>
    <property type="project" value="UniProtKB"/>
</dbReference>
<dbReference type="GO" id="GO:0051715">
    <property type="term" value="P:cytolysis in another organism"/>
    <property type="evidence" value="ECO:0000314"/>
    <property type="project" value="UniProtKB"/>
</dbReference>
<dbReference type="GO" id="GO:0002213">
    <property type="term" value="P:defense response to insect"/>
    <property type="evidence" value="ECO:0000314"/>
    <property type="project" value="UniProtKB"/>
</dbReference>
<dbReference type="GO" id="GO:0035738">
    <property type="term" value="P:venom-mediated perturbation of biological process"/>
    <property type="evidence" value="ECO:0000314"/>
    <property type="project" value="UniProtKB"/>
</dbReference>
<protein>
    <recommendedName>
        <fullName evidence="2">DELTA-pseudomyrmecitoxin-Pp1a subunit A</fullName>
        <shortName evidence="2">DELTA-PSDTX-Pp1a subunit A</shortName>
    </recommendedName>
</protein>
<keyword id="KW-0903">Direct protein sequencing</keyword>
<keyword id="KW-1015">Disulfide bond</keyword>
<keyword id="KW-0964">Secreted</keyword>
<keyword id="KW-0800">Toxin</keyword>
<evidence type="ECO:0000269" key="1">
    <source>
    </source>
</evidence>
<evidence type="ECO:0000303" key="2">
    <source>
    </source>
</evidence>
<evidence type="ECO:0000305" key="3">
    <source>
    </source>
</evidence>
<name>PP1AA_PSEPY</name>
<comment type="function">
    <text evidence="1">This heterodimer has insecticidal and cytotoxic properties (PubMed:33344898). Induces immediate paralysis when injected into blowflies (Lucilia cuprina), and then death within 24 hours (PubMed:33344898). Also inhibits the growth of Aedes albopictus mosquito C6/36 cells (PubMed:33344898).</text>
</comment>
<comment type="subunit">
    <text evidence="1">Heterodimer composed of subunit A and subunit B (DELTA-PSDTX-Pp1a); disulfide-linked.</text>
</comment>
<comment type="subcellular location">
    <subcellularLocation>
        <location evidence="1">Secreted</location>
    </subcellularLocation>
</comment>
<comment type="tissue specificity">
    <text evidence="3">Expressed by the venom gland.</text>
</comment>
<comment type="toxic dose">
    <text evidence="1">Heterodimer (A and B chains): PD(50) is 2.5 nmol/g in sheep blowflies (Lucilia cuprina) (at 0.5 hours post-injection).</text>
</comment>
<comment type="toxic dose">
    <text evidence="1">Heterodimer (A and B chains): LD(50) is 3.0 nmol/g by injection into the ventro-lateral thorax of sheep blowflies (Lucilia cuprina).</text>
</comment>
<comment type="toxic dose">
    <text evidence="1">Heterodimer (A and B chains): LD(50) is 1.04 um/ml in Aedes albopictus mosquito C6/36 cells.</text>
</comment>
<comment type="miscellaneous">
    <text evidence="1">Electrospray ionization experiments give a mass of 6598.6 Da for DELTA-pseudomyrmecitoxin-Pp1a heterodimer (subunits A+B).</text>
</comment>
<organism evidence="2">
    <name type="scientific">Pseudomyrmex penetrator</name>
    <name type="common">Ant</name>
    <dbReference type="NCBI Taxonomy" id="621823"/>
    <lineage>
        <taxon>Eukaryota</taxon>
        <taxon>Metazoa</taxon>
        <taxon>Ecdysozoa</taxon>
        <taxon>Arthropoda</taxon>
        <taxon>Hexapoda</taxon>
        <taxon>Insecta</taxon>
        <taxon>Pterygota</taxon>
        <taxon>Neoptera</taxon>
        <taxon>Endopterygota</taxon>
        <taxon>Hymenoptera</taxon>
        <taxon>Apocrita</taxon>
        <taxon>Aculeata</taxon>
        <taxon>Formicoidea</taxon>
        <taxon>Formicidae</taxon>
        <taxon>Pseudomyrmecinae</taxon>
        <taxon>Pseudomyrmex</taxon>
    </lineage>
</organism>
<sequence length="27" mass="2983">KIPNILKGGLKSICKHRKYLDKACAAI</sequence>
<accession>C0HLS2</accession>
<proteinExistence type="evidence at protein level"/>